<accession>Q87KF0</accession>
<proteinExistence type="inferred from homology"/>
<reference key="1">
    <citation type="journal article" date="2003" name="Lancet">
        <title>Genome sequence of Vibrio parahaemolyticus: a pathogenic mechanism distinct from that of V. cholerae.</title>
        <authorList>
            <person name="Makino K."/>
            <person name="Oshima K."/>
            <person name="Kurokawa K."/>
            <person name="Yokoyama K."/>
            <person name="Uda T."/>
            <person name="Tagomori K."/>
            <person name="Iijima Y."/>
            <person name="Najima M."/>
            <person name="Nakano M."/>
            <person name="Yamashita A."/>
            <person name="Kubota Y."/>
            <person name="Kimura S."/>
            <person name="Yasunaga T."/>
            <person name="Honda T."/>
            <person name="Shinagawa H."/>
            <person name="Hattori M."/>
            <person name="Iida T."/>
        </authorList>
    </citation>
    <scope>NUCLEOTIDE SEQUENCE [LARGE SCALE GENOMIC DNA]</scope>
    <source>
        <strain>RIMD 2210633</strain>
    </source>
</reference>
<gene>
    <name evidence="1" type="primary">thiC</name>
    <name type="ordered locus">VP3027</name>
</gene>
<comment type="function">
    <text evidence="1">Catalyzes the synthesis of the hydroxymethylpyrimidine phosphate (HMP-P) moiety of thiamine from aminoimidazole ribotide (AIR) in a radical S-adenosyl-L-methionine (SAM)-dependent reaction.</text>
</comment>
<comment type="catalytic activity">
    <reaction evidence="1">
        <text>5-amino-1-(5-phospho-beta-D-ribosyl)imidazole + S-adenosyl-L-methionine = 4-amino-2-methyl-5-(phosphooxymethyl)pyrimidine + CO + 5'-deoxyadenosine + formate + L-methionine + 3 H(+)</text>
        <dbReference type="Rhea" id="RHEA:24840"/>
        <dbReference type="ChEBI" id="CHEBI:15378"/>
        <dbReference type="ChEBI" id="CHEBI:15740"/>
        <dbReference type="ChEBI" id="CHEBI:17245"/>
        <dbReference type="ChEBI" id="CHEBI:17319"/>
        <dbReference type="ChEBI" id="CHEBI:57844"/>
        <dbReference type="ChEBI" id="CHEBI:58354"/>
        <dbReference type="ChEBI" id="CHEBI:59789"/>
        <dbReference type="ChEBI" id="CHEBI:137981"/>
        <dbReference type="EC" id="4.1.99.17"/>
    </reaction>
</comment>
<comment type="cofactor">
    <cofactor evidence="1">
        <name>[4Fe-4S] cluster</name>
        <dbReference type="ChEBI" id="CHEBI:49883"/>
    </cofactor>
    <text evidence="1">Binds 1 [4Fe-4S] cluster per subunit. The cluster is coordinated with 3 cysteines and an exchangeable S-adenosyl-L-methionine.</text>
</comment>
<comment type="pathway">
    <text evidence="1">Cofactor biosynthesis; thiamine diphosphate biosynthesis.</text>
</comment>
<comment type="subunit">
    <text evidence="1">Homodimer.</text>
</comment>
<comment type="similarity">
    <text evidence="1">Belongs to the ThiC family.</text>
</comment>
<protein>
    <recommendedName>
        <fullName evidence="1">Phosphomethylpyrimidine synthase</fullName>
        <ecNumber evidence="1">4.1.99.17</ecNumber>
    </recommendedName>
    <alternativeName>
        <fullName evidence="1">Hydroxymethylpyrimidine phosphate synthase</fullName>
        <shortName evidence="1">HMP-P synthase</shortName>
        <shortName evidence="1">HMP-phosphate synthase</shortName>
        <shortName evidence="1">HMPP synthase</shortName>
    </alternativeName>
    <alternativeName>
        <fullName evidence="1">Thiamine biosynthesis protein ThiC</fullName>
    </alternativeName>
</protein>
<sequence>MSSRKQARLEAKQFIDTLSVQPYPNSTKVYIEGSRPDIRVPMREISLADSLIGGTKEAPIFEPNEPVRVYDTSGVYTDPDYAIDLYSGLPKLREGWIEERNDTEILEDVSSVYAKERLDDETLDDLRYGNLPRIRRAKAGKCVTQLHYARKGIVTPEMEYIALRENMGRAQYRDDVLTQQHPGQSFGANLPKDITAEFVRKEVAEGRAIIPSNINHPESEPMIIGRNFLVKVNANIGNSSVTSSIEEEVEKLVWATRWGGDTVMDLSTGRNIHETREWILRNSPVPIGTVPMYQALEKVNGIAENLNWEVMRDTLIEQAEQGVDYFTIHAGLLLRYVPMTAKRVTGIVSRGGSIIAKWCLAHHQESFLYTHFREICEICAKYDVALSLGDGLRPGSVADANDEAQFAELRTLGELTKIAWEYDVQVIIEGPGHIPMHMIKENMDQQLEHCHEAPFYTLGPLTTDIAPGYDHITSGIGAAMIGWYGCAMLCYVTPKEHLGLPNKEDVKTGMITYKLAAHAADLAKGHPGAQVRDNALSKARFEFRWEDQFNLALDPDTARAFHDETLPQESGKVAHFCSMCGPKFCSMKISQEVREYAKDTEQVAADQAISIKMLDDPLEGMRKKSEEFRATGSELYHPAVHAEADE</sequence>
<keyword id="KW-0004">4Fe-4S</keyword>
<keyword id="KW-0408">Iron</keyword>
<keyword id="KW-0411">Iron-sulfur</keyword>
<keyword id="KW-0456">Lyase</keyword>
<keyword id="KW-0479">Metal-binding</keyword>
<keyword id="KW-0949">S-adenosyl-L-methionine</keyword>
<keyword id="KW-0784">Thiamine biosynthesis</keyword>
<keyword id="KW-0862">Zinc</keyword>
<evidence type="ECO:0000255" key="1">
    <source>
        <dbReference type="HAMAP-Rule" id="MF_00089"/>
    </source>
</evidence>
<evidence type="ECO:0000256" key="2">
    <source>
        <dbReference type="SAM" id="MobiDB-lite"/>
    </source>
</evidence>
<feature type="chain" id="PRO_0000152846" description="Phosphomethylpyrimidine synthase">
    <location>
        <begin position="1"/>
        <end position="646"/>
    </location>
</feature>
<feature type="region of interest" description="Disordered" evidence="2">
    <location>
        <begin position="624"/>
        <end position="646"/>
    </location>
</feature>
<feature type="binding site" evidence="1">
    <location>
        <position position="235"/>
    </location>
    <ligand>
        <name>substrate</name>
    </ligand>
</feature>
<feature type="binding site" evidence="1">
    <location>
        <position position="264"/>
    </location>
    <ligand>
        <name>substrate</name>
    </ligand>
</feature>
<feature type="binding site" evidence="1">
    <location>
        <position position="293"/>
    </location>
    <ligand>
        <name>substrate</name>
    </ligand>
</feature>
<feature type="binding site" evidence="1">
    <location>
        <position position="329"/>
    </location>
    <ligand>
        <name>substrate</name>
    </ligand>
</feature>
<feature type="binding site" evidence="1">
    <location>
        <begin position="349"/>
        <end position="351"/>
    </location>
    <ligand>
        <name>substrate</name>
    </ligand>
</feature>
<feature type="binding site" evidence="1">
    <location>
        <begin position="390"/>
        <end position="393"/>
    </location>
    <ligand>
        <name>substrate</name>
    </ligand>
</feature>
<feature type="binding site" evidence="1">
    <location>
        <position position="429"/>
    </location>
    <ligand>
        <name>substrate</name>
    </ligand>
</feature>
<feature type="binding site" evidence="1">
    <location>
        <position position="433"/>
    </location>
    <ligand>
        <name>Zn(2+)</name>
        <dbReference type="ChEBI" id="CHEBI:29105"/>
    </ligand>
</feature>
<feature type="binding site" evidence="1">
    <location>
        <position position="456"/>
    </location>
    <ligand>
        <name>substrate</name>
    </ligand>
</feature>
<feature type="binding site" evidence="1">
    <location>
        <position position="497"/>
    </location>
    <ligand>
        <name>Zn(2+)</name>
        <dbReference type="ChEBI" id="CHEBI:29105"/>
    </ligand>
</feature>
<feature type="binding site" evidence="1">
    <location>
        <position position="577"/>
    </location>
    <ligand>
        <name>[4Fe-4S] cluster</name>
        <dbReference type="ChEBI" id="CHEBI:49883"/>
        <note>4Fe-4S-S-AdoMet</note>
    </ligand>
</feature>
<feature type="binding site" evidence="1">
    <location>
        <position position="580"/>
    </location>
    <ligand>
        <name>[4Fe-4S] cluster</name>
        <dbReference type="ChEBI" id="CHEBI:49883"/>
        <note>4Fe-4S-S-AdoMet</note>
    </ligand>
</feature>
<feature type="binding site" evidence="1">
    <location>
        <position position="585"/>
    </location>
    <ligand>
        <name>[4Fe-4S] cluster</name>
        <dbReference type="ChEBI" id="CHEBI:49883"/>
        <note>4Fe-4S-S-AdoMet</note>
    </ligand>
</feature>
<dbReference type="EC" id="4.1.99.17" evidence="1"/>
<dbReference type="EMBL" id="BA000031">
    <property type="protein sequence ID" value="BAC61290.1"/>
    <property type="molecule type" value="Genomic_DNA"/>
</dbReference>
<dbReference type="RefSeq" id="NP_799406.1">
    <property type="nucleotide sequence ID" value="NC_004603.1"/>
</dbReference>
<dbReference type="RefSeq" id="WP_005465061.1">
    <property type="nucleotide sequence ID" value="NC_004603.1"/>
</dbReference>
<dbReference type="SMR" id="Q87KF0"/>
<dbReference type="GeneID" id="1190619"/>
<dbReference type="KEGG" id="vpa:VP3027"/>
<dbReference type="PATRIC" id="fig|223926.6.peg.2910"/>
<dbReference type="eggNOG" id="COG0422">
    <property type="taxonomic scope" value="Bacteria"/>
</dbReference>
<dbReference type="HOGENOM" id="CLU_013181_2_1_6"/>
<dbReference type="UniPathway" id="UPA00060"/>
<dbReference type="Proteomes" id="UP000002493">
    <property type="component" value="Chromosome 1"/>
</dbReference>
<dbReference type="GO" id="GO:0005829">
    <property type="term" value="C:cytosol"/>
    <property type="evidence" value="ECO:0007669"/>
    <property type="project" value="TreeGrafter"/>
</dbReference>
<dbReference type="GO" id="GO:0051539">
    <property type="term" value="F:4 iron, 4 sulfur cluster binding"/>
    <property type="evidence" value="ECO:0007669"/>
    <property type="project" value="UniProtKB-KW"/>
</dbReference>
<dbReference type="GO" id="GO:0016830">
    <property type="term" value="F:carbon-carbon lyase activity"/>
    <property type="evidence" value="ECO:0007669"/>
    <property type="project" value="InterPro"/>
</dbReference>
<dbReference type="GO" id="GO:0008270">
    <property type="term" value="F:zinc ion binding"/>
    <property type="evidence" value="ECO:0007669"/>
    <property type="project" value="UniProtKB-UniRule"/>
</dbReference>
<dbReference type="GO" id="GO:0009228">
    <property type="term" value="P:thiamine biosynthetic process"/>
    <property type="evidence" value="ECO:0007669"/>
    <property type="project" value="UniProtKB-KW"/>
</dbReference>
<dbReference type="GO" id="GO:0009229">
    <property type="term" value="P:thiamine diphosphate biosynthetic process"/>
    <property type="evidence" value="ECO:0007669"/>
    <property type="project" value="UniProtKB-UniRule"/>
</dbReference>
<dbReference type="FunFam" id="3.20.20.540:FF:000001">
    <property type="entry name" value="Phosphomethylpyrimidine synthase"/>
    <property type="match status" value="1"/>
</dbReference>
<dbReference type="Gene3D" id="6.10.250.620">
    <property type="match status" value="1"/>
</dbReference>
<dbReference type="Gene3D" id="3.20.20.540">
    <property type="entry name" value="Radical SAM ThiC family, central domain"/>
    <property type="match status" value="1"/>
</dbReference>
<dbReference type="HAMAP" id="MF_00089">
    <property type="entry name" value="ThiC"/>
    <property type="match status" value="1"/>
</dbReference>
<dbReference type="InterPro" id="IPR037509">
    <property type="entry name" value="ThiC"/>
</dbReference>
<dbReference type="InterPro" id="IPR025747">
    <property type="entry name" value="ThiC-associated_dom"/>
</dbReference>
<dbReference type="InterPro" id="IPR038521">
    <property type="entry name" value="ThiC/Bza_core_dom"/>
</dbReference>
<dbReference type="InterPro" id="IPR002817">
    <property type="entry name" value="ThiC/BzaA/B"/>
</dbReference>
<dbReference type="NCBIfam" id="NF006763">
    <property type="entry name" value="PRK09284.1"/>
    <property type="match status" value="1"/>
</dbReference>
<dbReference type="NCBIfam" id="NF009895">
    <property type="entry name" value="PRK13352.1"/>
    <property type="match status" value="1"/>
</dbReference>
<dbReference type="NCBIfam" id="TIGR00190">
    <property type="entry name" value="thiC"/>
    <property type="match status" value="1"/>
</dbReference>
<dbReference type="PANTHER" id="PTHR30557:SF1">
    <property type="entry name" value="PHOSPHOMETHYLPYRIMIDINE SYNTHASE, CHLOROPLASTIC"/>
    <property type="match status" value="1"/>
</dbReference>
<dbReference type="PANTHER" id="PTHR30557">
    <property type="entry name" value="THIAMINE BIOSYNTHESIS PROTEIN THIC"/>
    <property type="match status" value="1"/>
</dbReference>
<dbReference type="Pfam" id="PF13667">
    <property type="entry name" value="ThiC-associated"/>
    <property type="match status" value="1"/>
</dbReference>
<dbReference type="Pfam" id="PF01964">
    <property type="entry name" value="ThiC_Rad_SAM"/>
    <property type="match status" value="1"/>
</dbReference>
<dbReference type="SFLD" id="SFLDF00407">
    <property type="entry name" value="phosphomethylpyrimidine_syntha"/>
    <property type="match status" value="1"/>
</dbReference>
<dbReference type="SFLD" id="SFLDG01114">
    <property type="entry name" value="phosphomethylpyrimidine_syntha"/>
    <property type="match status" value="1"/>
</dbReference>
<dbReference type="SFLD" id="SFLDS00113">
    <property type="entry name" value="Radical_SAM_Phosphomethylpyrim"/>
    <property type="match status" value="1"/>
</dbReference>
<organism>
    <name type="scientific">Vibrio parahaemolyticus serotype O3:K6 (strain RIMD 2210633)</name>
    <dbReference type="NCBI Taxonomy" id="223926"/>
    <lineage>
        <taxon>Bacteria</taxon>
        <taxon>Pseudomonadati</taxon>
        <taxon>Pseudomonadota</taxon>
        <taxon>Gammaproteobacteria</taxon>
        <taxon>Vibrionales</taxon>
        <taxon>Vibrionaceae</taxon>
        <taxon>Vibrio</taxon>
    </lineage>
</organism>
<name>THIC_VIBPA</name>